<organism>
    <name type="scientific">Histophilus somni (strain 2336)</name>
    <name type="common">Haemophilus somnus</name>
    <dbReference type="NCBI Taxonomy" id="228400"/>
    <lineage>
        <taxon>Bacteria</taxon>
        <taxon>Pseudomonadati</taxon>
        <taxon>Pseudomonadota</taxon>
        <taxon>Gammaproteobacteria</taxon>
        <taxon>Pasteurellales</taxon>
        <taxon>Pasteurellaceae</taxon>
        <taxon>Histophilus</taxon>
    </lineage>
</organism>
<comment type="function">
    <text evidence="1">This protein is one of the two subunits of integration host factor, a specific DNA-binding protein that functions in genetic recombination as well as in transcriptional and translational control.</text>
</comment>
<comment type="subunit">
    <text evidence="1">Heterodimer of an alpha and a beta chain.</text>
</comment>
<comment type="similarity">
    <text evidence="1">Belongs to the bacterial histone-like protein family.</text>
</comment>
<evidence type="ECO:0000255" key="1">
    <source>
        <dbReference type="HAMAP-Rule" id="MF_00380"/>
    </source>
</evidence>
<name>IHFA_HISS2</name>
<sequence length="97" mass="10922">MALTKIELKNSLIEQGLNKLEAKKVVEGFFEQIRVSLENGEDVKLSGFGNFELRDKSSRPGRNPKTGEAIPVSARRVVVFRPGQKLRSRVEKTKPKN</sequence>
<gene>
    <name evidence="1" type="primary">ihfA</name>
    <name evidence="1" type="synonym">himA</name>
    <name type="ordered locus">HSM_1337</name>
</gene>
<protein>
    <recommendedName>
        <fullName evidence="1">Integration host factor subunit alpha</fullName>
        <shortName evidence="1">IHF-alpha</shortName>
    </recommendedName>
</protein>
<reference key="1">
    <citation type="submission" date="2008-02" db="EMBL/GenBank/DDBJ databases">
        <title>Complete sequence of Haemophilus somnus 2336.</title>
        <authorList>
            <consortium name="US DOE Joint Genome Institute"/>
            <person name="Siddaramappa S."/>
            <person name="Duncan A.J."/>
            <person name="Challacombe J.F."/>
            <person name="Rainey D."/>
            <person name="Gillaspy A.F."/>
            <person name="Carson M."/>
            <person name="Gipson J."/>
            <person name="Gipson M."/>
            <person name="Bruce D."/>
            <person name="Detter J.C."/>
            <person name="Han C.S."/>
            <person name="Land M."/>
            <person name="Tapia R."/>
            <person name="Thompson L.S."/>
            <person name="Orvis J."/>
            <person name="Zaitshik J."/>
            <person name="Barnes G."/>
            <person name="Brettin T.S."/>
            <person name="Dyer D.W."/>
            <person name="Inzana T.J."/>
        </authorList>
    </citation>
    <scope>NUCLEOTIDE SEQUENCE [LARGE SCALE GENOMIC DNA]</scope>
    <source>
        <strain>2336</strain>
    </source>
</reference>
<dbReference type="EMBL" id="CP000947">
    <property type="protein sequence ID" value="ACA31073.1"/>
    <property type="molecule type" value="Genomic_DNA"/>
</dbReference>
<dbReference type="RefSeq" id="WP_011609015.1">
    <property type="nucleotide sequence ID" value="NC_010519.1"/>
</dbReference>
<dbReference type="SMR" id="B0UU60"/>
<dbReference type="STRING" id="228400.HSM_1337"/>
<dbReference type="GeneID" id="31487639"/>
<dbReference type="KEGG" id="hsm:HSM_1337"/>
<dbReference type="HOGENOM" id="CLU_105066_1_3_6"/>
<dbReference type="GO" id="GO:0005829">
    <property type="term" value="C:cytosol"/>
    <property type="evidence" value="ECO:0007669"/>
    <property type="project" value="TreeGrafter"/>
</dbReference>
<dbReference type="GO" id="GO:0003677">
    <property type="term" value="F:DNA binding"/>
    <property type="evidence" value="ECO:0007669"/>
    <property type="project" value="UniProtKB-UniRule"/>
</dbReference>
<dbReference type="GO" id="GO:0030527">
    <property type="term" value="F:structural constituent of chromatin"/>
    <property type="evidence" value="ECO:0007669"/>
    <property type="project" value="InterPro"/>
</dbReference>
<dbReference type="GO" id="GO:0006310">
    <property type="term" value="P:DNA recombination"/>
    <property type="evidence" value="ECO:0007669"/>
    <property type="project" value="UniProtKB-UniRule"/>
</dbReference>
<dbReference type="GO" id="GO:0009893">
    <property type="term" value="P:positive regulation of metabolic process"/>
    <property type="evidence" value="ECO:0007669"/>
    <property type="project" value="UniProtKB-ARBA"/>
</dbReference>
<dbReference type="GO" id="GO:0006355">
    <property type="term" value="P:regulation of DNA-templated transcription"/>
    <property type="evidence" value="ECO:0007669"/>
    <property type="project" value="UniProtKB-UniRule"/>
</dbReference>
<dbReference type="GO" id="GO:0006417">
    <property type="term" value="P:regulation of translation"/>
    <property type="evidence" value="ECO:0007669"/>
    <property type="project" value="UniProtKB-UniRule"/>
</dbReference>
<dbReference type="CDD" id="cd13835">
    <property type="entry name" value="IHF_A"/>
    <property type="match status" value="1"/>
</dbReference>
<dbReference type="Gene3D" id="4.10.520.10">
    <property type="entry name" value="IHF-like DNA-binding proteins"/>
    <property type="match status" value="1"/>
</dbReference>
<dbReference type="HAMAP" id="MF_00380">
    <property type="entry name" value="IHF_alpha"/>
    <property type="match status" value="1"/>
</dbReference>
<dbReference type="InterPro" id="IPR000119">
    <property type="entry name" value="Hist_DNA-bd"/>
</dbReference>
<dbReference type="InterPro" id="IPR020816">
    <property type="entry name" value="Histone-like_DNA-bd_CS"/>
</dbReference>
<dbReference type="InterPro" id="IPR010992">
    <property type="entry name" value="IHF-like_DNA-bd_dom_sf"/>
</dbReference>
<dbReference type="InterPro" id="IPR005684">
    <property type="entry name" value="IHF_alpha"/>
</dbReference>
<dbReference type="NCBIfam" id="TIGR00987">
    <property type="entry name" value="himA"/>
    <property type="match status" value="1"/>
</dbReference>
<dbReference type="NCBIfam" id="NF001401">
    <property type="entry name" value="PRK00285.1"/>
    <property type="match status" value="1"/>
</dbReference>
<dbReference type="PANTHER" id="PTHR33175">
    <property type="entry name" value="DNA-BINDING PROTEIN HU"/>
    <property type="match status" value="1"/>
</dbReference>
<dbReference type="PANTHER" id="PTHR33175:SF2">
    <property type="entry name" value="INTEGRATION HOST FACTOR SUBUNIT ALPHA"/>
    <property type="match status" value="1"/>
</dbReference>
<dbReference type="Pfam" id="PF00216">
    <property type="entry name" value="Bac_DNA_binding"/>
    <property type="match status" value="1"/>
</dbReference>
<dbReference type="PRINTS" id="PR01727">
    <property type="entry name" value="DNABINDINGHU"/>
</dbReference>
<dbReference type="SMART" id="SM00411">
    <property type="entry name" value="BHL"/>
    <property type="match status" value="1"/>
</dbReference>
<dbReference type="SUPFAM" id="SSF47729">
    <property type="entry name" value="IHF-like DNA-binding proteins"/>
    <property type="match status" value="1"/>
</dbReference>
<dbReference type="PROSITE" id="PS00045">
    <property type="entry name" value="HISTONE_LIKE"/>
    <property type="match status" value="1"/>
</dbReference>
<proteinExistence type="inferred from homology"/>
<keyword id="KW-0233">DNA recombination</keyword>
<keyword id="KW-0238">DNA-binding</keyword>
<keyword id="KW-0804">Transcription</keyword>
<keyword id="KW-0805">Transcription regulation</keyword>
<keyword id="KW-0810">Translation regulation</keyword>
<accession>B0UU60</accession>
<feature type="chain" id="PRO_1000080032" description="Integration host factor subunit alpha">
    <location>
        <begin position="1"/>
        <end position="97"/>
    </location>
</feature>